<feature type="chain" id="PRO_0000369946" description="Serine hydroxymethyltransferase">
    <location>
        <begin position="1"/>
        <end position="415"/>
    </location>
</feature>
<feature type="binding site" evidence="1">
    <location>
        <position position="120"/>
    </location>
    <ligand>
        <name>(6S)-5,6,7,8-tetrahydrofolate</name>
        <dbReference type="ChEBI" id="CHEBI:57453"/>
    </ligand>
</feature>
<feature type="binding site" evidence="1">
    <location>
        <begin position="124"/>
        <end position="126"/>
    </location>
    <ligand>
        <name>(6S)-5,6,7,8-tetrahydrofolate</name>
        <dbReference type="ChEBI" id="CHEBI:57453"/>
    </ligand>
</feature>
<feature type="site" description="Plays an important role in substrate specificity" evidence="1">
    <location>
        <position position="228"/>
    </location>
</feature>
<feature type="modified residue" description="N6-(pyridoxal phosphate)lysine" evidence="1">
    <location>
        <position position="229"/>
    </location>
</feature>
<reference key="1">
    <citation type="journal article" date="2008" name="Genome Res.">
        <title>The genome of Pelotomaculum thermopropionicum reveals niche-associated evolution in anaerobic microbiota.</title>
        <authorList>
            <person name="Kosaka T."/>
            <person name="Kato S."/>
            <person name="Shimoyama T."/>
            <person name="Ishii S."/>
            <person name="Abe T."/>
            <person name="Watanabe K."/>
        </authorList>
    </citation>
    <scope>NUCLEOTIDE SEQUENCE [LARGE SCALE GENOMIC DNA]</scope>
    <source>
        <strain>DSM 13744 / JCM 10971 / SI</strain>
    </source>
</reference>
<organism>
    <name type="scientific">Pelotomaculum thermopropionicum (strain DSM 13744 / JCM 10971 / SI)</name>
    <dbReference type="NCBI Taxonomy" id="370438"/>
    <lineage>
        <taxon>Bacteria</taxon>
        <taxon>Bacillati</taxon>
        <taxon>Bacillota</taxon>
        <taxon>Clostridia</taxon>
        <taxon>Eubacteriales</taxon>
        <taxon>Desulfotomaculaceae</taxon>
        <taxon>Pelotomaculum</taxon>
    </lineage>
</organism>
<sequence length="415" mass="45455">MSLKRPLSEVDPEIFRAIELETQRQRNTLELIASENVASRAVMEAQGSVLTNKYAEGYPGRRYYGGCEFVDIAEDLAISRAKELFGAGFANVQPHSGAQANTAVYFALLNPGDTIMGMDLAHGGHLTHGSPVNISGRYFKFTFYGVEKETGRINYEKMFSIAFEHKPRMIVAGASAYPRAIDFYKIKEIAAEVGAYLMVDMAHIAGLVAAGLHMSPVPYADVVTTTTHKTLRGPRGGLILCKDAERYGTKINRAVFPGVQGGPLMHVIAAKAVAFKEAMEPGFKEYQRKIVSNARALADALLERGFELVSGGTDNHLILVDLRSKKITGREAQELFDAVGVTVNKNAVPFDPQPPNIASGIRIGTPAVTSRGLNEDDMVQIAEIMDYAIEHRDDRGKLEKARAKVDEICARYPLY</sequence>
<evidence type="ECO:0000255" key="1">
    <source>
        <dbReference type="HAMAP-Rule" id="MF_00051"/>
    </source>
</evidence>
<accession>A5CYB7</accession>
<proteinExistence type="inferred from homology"/>
<gene>
    <name evidence="1" type="primary">glyA</name>
    <name type="ordered locus">PTH_2824</name>
</gene>
<keyword id="KW-0028">Amino-acid biosynthesis</keyword>
<keyword id="KW-0963">Cytoplasm</keyword>
<keyword id="KW-0554">One-carbon metabolism</keyword>
<keyword id="KW-0663">Pyridoxal phosphate</keyword>
<keyword id="KW-1185">Reference proteome</keyword>
<keyword id="KW-0808">Transferase</keyword>
<comment type="function">
    <text evidence="1">Catalyzes the reversible interconversion of serine and glycine with tetrahydrofolate (THF) serving as the one-carbon carrier. This reaction serves as the major source of one-carbon groups required for the biosynthesis of purines, thymidylate, methionine, and other important biomolecules. Also exhibits THF-independent aldolase activity toward beta-hydroxyamino acids, producing glycine and aldehydes, via a retro-aldol mechanism.</text>
</comment>
<comment type="catalytic activity">
    <reaction evidence="1">
        <text>(6R)-5,10-methylene-5,6,7,8-tetrahydrofolate + glycine + H2O = (6S)-5,6,7,8-tetrahydrofolate + L-serine</text>
        <dbReference type="Rhea" id="RHEA:15481"/>
        <dbReference type="ChEBI" id="CHEBI:15377"/>
        <dbReference type="ChEBI" id="CHEBI:15636"/>
        <dbReference type="ChEBI" id="CHEBI:33384"/>
        <dbReference type="ChEBI" id="CHEBI:57305"/>
        <dbReference type="ChEBI" id="CHEBI:57453"/>
        <dbReference type="EC" id="2.1.2.1"/>
    </reaction>
</comment>
<comment type="cofactor">
    <cofactor evidence="1">
        <name>pyridoxal 5'-phosphate</name>
        <dbReference type="ChEBI" id="CHEBI:597326"/>
    </cofactor>
</comment>
<comment type="pathway">
    <text evidence="1">One-carbon metabolism; tetrahydrofolate interconversion.</text>
</comment>
<comment type="pathway">
    <text evidence="1">Amino-acid biosynthesis; glycine biosynthesis; glycine from L-serine: step 1/1.</text>
</comment>
<comment type="subunit">
    <text evidence="1">Homodimer.</text>
</comment>
<comment type="subcellular location">
    <subcellularLocation>
        <location evidence="1">Cytoplasm</location>
    </subcellularLocation>
</comment>
<comment type="similarity">
    <text evidence="1">Belongs to the SHMT family.</text>
</comment>
<name>GLYA_PELTS</name>
<protein>
    <recommendedName>
        <fullName evidence="1">Serine hydroxymethyltransferase</fullName>
        <shortName evidence="1">SHMT</shortName>
        <shortName evidence="1">Serine methylase</shortName>
        <ecNumber evidence="1">2.1.2.1</ecNumber>
    </recommendedName>
</protein>
<dbReference type="EC" id="2.1.2.1" evidence="1"/>
<dbReference type="EMBL" id="AP009389">
    <property type="protein sequence ID" value="BAF61005.1"/>
    <property type="molecule type" value="Genomic_DNA"/>
</dbReference>
<dbReference type="SMR" id="A5CYB7"/>
<dbReference type="STRING" id="370438.PTH_2824"/>
<dbReference type="KEGG" id="pth:PTH_2824"/>
<dbReference type="eggNOG" id="COG0112">
    <property type="taxonomic scope" value="Bacteria"/>
</dbReference>
<dbReference type="HOGENOM" id="CLU_022477_2_1_9"/>
<dbReference type="UniPathway" id="UPA00193"/>
<dbReference type="UniPathway" id="UPA00288">
    <property type="reaction ID" value="UER01023"/>
</dbReference>
<dbReference type="Proteomes" id="UP000006556">
    <property type="component" value="Chromosome"/>
</dbReference>
<dbReference type="GO" id="GO:0005829">
    <property type="term" value="C:cytosol"/>
    <property type="evidence" value="ECO:0007669"/>
    <property type="project" value="TreeGrafter"/>
</dbReference>
<dbReference type="GO" id="GO:0004372">
    <property type="term" value="F:glycine hydroxymethyltransferase activity"/>
    <property type="evidence" value="ECO:0007669"/>
    <property type="project" value="UniProtKB-UniRule"/>
</dbReference>
<dbReference type="GO" id="GO:0030170">
    <property type="term" value="F:pyridoxal phosphate binding"/>
    <property type="evidence" value="ECO:0007669"/>
    <property type="project" value="UniProtKB-UniRule"/>
</dbReference>
<dbReference type="GO" id="GO:0019264">
    <property type="term" value="P:glycine biosynthetic process from serine"/>
    <property type="evidence" value="ECO:0007669"/>
    <property type="project" value="UniProtKB-UniRule"/>
</dbReference>
<dbReference type="GO" id="GO:0035999">
    <property type="term" value="P:tetrahydrofolate interconversion"/>
    <property type="evidence" value="ECO:0007669"/>
    <property type="project" value="UniProtKB-UniRule"/>
</dbReference>
<dbReference type="CDD" id="cd00378">
    <property type="entry name" value="SHMT"/>
    <property type="match status" value="1"/>
</dbReference>
<dbReference type="FunFam" id="3.40.640.10:FF:000001">
    <property type="entry name" value="Serine hydroxymethyltransferase"/>
    <property type="match status" value="1"/>
</dbReference>
<dbReference type="FunFam" id="3.90.1150.10:FF:000003">
    <property type="entry name" value="Serine hydroxymethyltransferase"/>
    <property type="match status" value="1"/>
</dbReference>
<dbReference type="Gene3D" id="3.90.1150.10">
    <property type="entry name" value="Aspartate Aminotransferase, domain 1"/>
    <property type="match status" value="1"/>
</dbReference>
<dbReference type="Gene3D" id="3.40.640.10">
    <property type="entry name" value="Type I PLP-dependent aspartate aminotransferase-like (Major domain)"/>
    <property type="match status" value="1"/>
</dbReference>
<dbReference type="HAMAP" id="MF_00051">
    <property type="entry name" value="SHMT"/>
    <property type="match status" value="1"/>
</dbReference>
<dbReference type="InterPro" id="IPR015424">
    <property type="entry name" value="PyrdxlP-dep_Trfase"/>
</dbReference>
<dbReference type="InterPro" id="IPR015421">
    <property type="entry name" value="PyrdxlP-dep_Trfase_major"/>
</dbReference>
<dbReference type="InterPro" id="IPR015422">
    <property type="entry name" value="PyrdxlP-dep_Trfase_small"/>
</dbReference>
<dbReference type="InterPro" id="IPR001085">
    <property type="entry name" value="Ser_HO-MeTrfase"/>
</dbReference>
<dbReference type="InterPro" id="IPR049943">
    <property type="entry name" value="Ser_HO-MeTrfase-like"/>
</dbReference>
<dbReference type="InterPro" id="IPR019798">
    <property type="entry name" value="Ser_HO-MeTrfase_PLP_BS"/>
</dbReference>
<dbReference type="InterPro" id="IPR039429">
    <property type="entry name" value="SHMT-like_dom"/>
</dbReference>
<dbReference type="NCBIfam" id="NF000586">
    <property type="entry name" value="PRK00011.1"/>
    <property type="match status" value="1"/>
</dbReference>
<dbReference type="PANTHER" id="PTHR11680">
    <property type="entry name" value="SERINE HYDROXYMETHYLTRANSFERASE"/>
    <property type="match status" value="1"/>
</dbReference>
<dbReference type="PANTHER" id="PTHR11680:SF35">
    <property type="entry name" value="SERINE HYDROXYMETHYLTRANSFERASE 1"/>
    <property type="match status" value="1"/>
</dbReference>
<dbReference type="Pfam" id="PF00464">
    <property type="entry name" value="SHMT"/>
    <property type="match status" value="1"/>
</dbReference>
<dbReference type="PIRSF" id="PIRSF000412">
    <property type="entry name" value="SHMT"/>
    <property type="match status" value="1"/>
</dbReference>
<dbReference type="SUPFAM" id="SSF53383">
    <property type="entry name" value="PLP-dependent transferases"/>
    <property type="match status" value="1"/>
</dbReference>
<dbReference type="PROSITE" id="PS00096">
    <property type="entry name" value="SHMT"/>
    <property type="match status" value="1"/>
</dbReference>